<organismHost>
    <name type="scientific">Aves</name>
    <dbReference type="NCBI Taxonomy" id="8782"/>
</organismHost>
<organismHost>
    <name type="scientific">Cetacea</name>
    <name type="common">whales</name>
    <dbReference type="NCBI Taxonomy" id="9721"/>
</organismHost>
<organismHost>
    <name type="scientific">Homo sapiens</name>
    <name type="common">Human</name>
    <dbReference type="NCBI Taxonomy" id="9606"/>
</organismHost>
<organismHost>
    <name type="scientific">Phocidae</name>
    <name type="common">true seals</name>
    <dbReference type="NCBI Taxonomy" id="9709"/>
</organismHost>
<organismHost>
    <name type="scientific">Sus scrofa</name>
    <name type="common">Pig</name>
    <dbReference type="NCBI Taxonomy" id="9823"/>
</organismHost>
<protein>
    <recommendedName>
        <fullName evidence="1">Polymerase basic protein 2</fullName>
    </recommendedName>
    <alternativeName>
        <fullName evidence="1">RNA-directed RNA polymerase subunit P3</fullName>
    </alternativeName>
</protein>
<evidence type="ECO:0000255" key="1">
    <source>
        <dbReference type="HAMAP-Rule" id="MF_04062"/>
    </source>
</evidence>
<sequence>MERIKELRNLMSQSRTREILTKTTVDHMAIIKKYTSGRQEKNPSLRMKWMMAMKYPITADKRITEMVPERNEQGQTLWSKMSDAGSDRVMVSPLAVTWWNRNGPVTNTVHYPKVYKTYFDKVERLKHGTFGPVHFRNQVKIRRRVDINPGHADLSAKEAQDVIMEVVFPNEVGARILTSESQLTITKEKKEELQDCKISPLMVAYMLERELVRKTRFLPVAGGTSSMYIEVLHLTQGTCWEQMYTPGGEVRNDDVDQSLIIAARNIVRRAAVSADPLASLLEMCHSTQIGGTRMVDILRQNPTEEQAVDICKAAMGLRISSSFSFGGFTFKRTSGSSIKREEEVLTGNLQTLKIRVHEGYEEFTMVGKRATAILRKATRRLVQLIVSGRDEQSIAEAIIVAMVFSQEDCMIKAVRGDLNFVNRANQRLNPMHQLLRHFQKDAKVLFQNWGIEHIDSVMGMVGVLPDMTPSTEMSMRGIRVSKMGVDEYSSTERVVVSIDRFLRVRDQRGNVLLSPEEVSETQGTERLTITYSSSMMWEINGPESVLVNTYQWIIRNWETVKIQWSQNPTMLYNKMEFEPFQSLVPKAIRGQYSGFVRTLFQQMRDVLGTFDTTQIIKLLPFAAAPPKQSRMQFSSLTVNVRGSGMRILVRGNSPVFNYNKTTKRLTILGKDAGTLIEDPDESTSGVESAVLRGFLILGKEDRRYGPALSINELSNLAKGEKANVLIGQGDVVLVMKRKRDSSILTDSQTATKRIRMAIN</sequence>
<gene>
    <name evidence="1" type="primary">PB2</name>
</gene>
<feature type="chain" id="PRO_0000279640" description="Polymerase basic protein 2">
    <location>
        <begin position="1"/>
        <end position="759"/>
    </location>
</feature>
<feature type="short sequence motif" description="Nuclear localization signal" evidence="1">
    <location>
        <begin position="736"/>
        <end position="739"/>
    </location>
</feature>
<feature type="site" description="Mammalian adaptation" evidence="1">
    <location>
        <position position="627"/>
    </location>
</feature>
<reference key="1">
    <citation type="submission" date="2005-12" db="EMBL/GenBank/DDBJ databases">
        <title>The NIAID influenza genome sequencing project.</title>
        <authorList>
            <person name="Ghedin E."/>
            <person name="Spiro D."/>
            <person name="Miller N."/>
            <person name="Zaborsky J."/>
            <person name="Feldblyum T."/>
            <person name="Subbu V."/>
            <person name="Shumway M."/>
            <person name="Sparenborg J."/>
            <person name="Groveman L."/>
            <person name="Halpin R."/>
            <person name="Sitz J."/>
            <person name="Koo H."/>
            <person name="Salzberg S.L."/>
            <person name="Webster R.G."/>
            <person name="Hoffmann E."/>
            <person name="Krauss S."/>
            <person name="Naeve C."/>
            <person name="Bao Y."/>
            <person name="Bolotov P."/>
            <person name="Dernovoy D."/>
            <person name="Kiryutin B."/>
            <person name="Lipman D.J."/>
            <person name="Tatusova T."/>
        </authorList>
    </citation>
    <scope>NUCLEOTIDE SEQUENCE [GENOMIC RNA]</scope>
</reference>
<dbReference type="EMBL" id="CY007626">
    <property type="protein sequence ID" value="ABC46575.1"/>
    <property type="molecule type" value="Genomic_RNA"/>
</dbReference>
<dbReference type="SMR" id="Q2RCG6"/>
<dbReference type="PRO" id="PR:Q2RCG6"/>
<dbReference type="Proteomes" id="UP000008577">
    <property type="component" value="Genome"/>
</dbReference>
<dbReference type="GO" id="GO:0033650">
    <property type="term" value="C:host cell mitochondrion"/>
    <property type="evidence" value="ECO:0007669"/>
    <property type="project" value="UniProtKB-SubCell"/>
</dbReference>
<dbReference type="GO" id="GO:0042025">
    <property type="term" value="C:host cell nucleus"/>
    <property type="evidence" value="ECO:0007669"/>
    <property type="project" value="UniProtKB-SubCell"/>
</dbReference>
<dbReference type="GO" id="GO:0044423">
    <property type="term" value="C:virion component"/>
    <property type="evidence" value="ECO:0007669"/>
    <property type="project" value="UniProtKB-UniRule"/>
</dbReference>
<dbReference type="GO" id="GO:0003723">
    <property type="term" value="F:RNA binding"/>
    <property type="evidence" value="ECO:0007669"/>
    <property type="project" value="UniProtKB-UniRule"/>
</dbReference>
<dbReference type="GO" id="GO:0003968">
    <property type="term" value="F:RNA-directed RNA polymerase activity"/>
    <property type="evidence" value="ECO:0007669"/>
    <property type="project" value="UniProtKB-UniRule"/>
</dbReference>
<dbReference type="GO" id="GO:0006370">
    <property type="term" value="P:7-methylguanosine mRNA capping"/>
    <property type="evidence" value="ECO:0007669"/>
    <property type="project" value="UniProtKB-UniRule"/>
</dbReference>
<dbReference type="GO" id="GO:0075526">
    <property type="term" value="P:cap snatching"/>
    <property type="evidence" value="ECO:0007669"/>
    <property type="project" value="UniProtKB-UniRule"/>
</dbReference>
<dbReference type="GO" id="GO:0006351">
    <property type="term" value="P:DNA-templated transcription"/>
    <property type="evidence" value="ECO:0007669"/>
    <property type="project" value="UniProtKB-UniRule"/>
</dbReference>
<dbReference type="GO" id="GO:0039545">
    <property type="term" value="P:symbiont-mediated suppression of host cytoplasmic pattern recognition receptor signaling pathway via inhibition of MAVS activity"/>
    <property type="evidence" value="ECO:0007669"/>
    <property type="project" value="UniProtKB-UniRule"/>
</dbReference>
<dbReference type="GO" id="GO:0039657">
    <property type="term" value="P:symbiont-mediated suppression of host gene expression"/>
    <property type="evidence" value="ECO:0007669"/>
    <property type="project" value="UniProtKB-KW"/>
</dbReference>
<dbReference type="GO" id="GO:0039523">
    <property type="term" value="P:symbiont-mediated suppression of host mRNA transcription via inhibition of RNA polymerase II activity"/>
    <property type="evidence" value="ECO:0007669"/>
    <property type="project" value="UniProtKB-UniRule"/>
</dbReference>
<dbReference type="GO" id="GO:0039694">
    <property type="term" value="P:viral RNA genome replication"/>
    <property type="evidence" value="ECO:0007669"/>
    <property type="project" value="InterPro"/>
</dbReference>
<dbReference type="FunFam" id="3.30.30.90:FF:000001">
    <property type="entry name" value="Polymerase basic protein 2"/>
    <property type="match status" value="1"/>
</dbReference>
<dbReference type="Gene3D" id="3.30.30.90">
    <property type="entry name" value="Polymerase Basic Protein 2, C-terminal domain"/>
    <property type="match status" value="1"/>
</dbReference>
<dbReference type="HAMAP" id="MF_04062">
    <property type="entry name" value="INV_PB2"/>
    <property type="match status" value="1"/>
</dbReference>
<dbReference type="InterPro" id="IPR049110">
    <property type="entry name" value="Flu_PB2_2nd"/>
</dbReference>
<dbReference type="InterPro" id="IPR049114">
    <property type="entry name" value="Flu_PB2_6th"/>
</dbReference>
<dbReference type="InterPro" id="IPR049115">
    <property type="entry name" value="Flu_PB2_C"/>
</dbReference>
<dbReference type="InterPro" id="IPR048298">
    <property type="entry name" value="Flu_PB2_CAP-bd"/>
</dbReference>
<dbReference type="InterPro" id="IPR049111">
    <property type="entry name" value="Flu_PB2_middle"/>
</dbReference>
<dbReference type="InterPro" id="IPR049106">
    <property type="entry name" value="Flu_PB2_N"/>
</dbReference>
<dbReference type="InterPro" id="IPR001591">
    <property type="entry name" value="INV_PB2"/>
</dbReference>
<dbReference type="InterPro" id="IPR049113">
    <property type="entry name" value="PB2_helical"/>
</dbReference>
<dbReference type="InterPro" id="IPR037258">
    <property type="entry name" value="PDB2_C"/>
</dbReference>
<dbReference type="Pfam" id="PF20947">
    <property type="entry name" value="Flu_PB2_1st"/>
    <property type="match status" value="1"/>
</dbReference>
<dbReference type="Pfam" id="PF20948">
    <property type="entry name" value="Flu_PB2_2nd"/>
    <property type="match status" value="1"/>
</dbReference>
<dbReference type="Pfam" id="PF20949">
    <property type="entry name" value="Flu_PB2_3rd"/>
    <property type="match status" value="1"/>
</dbReference>
<dbReference type="Pfam" id="PF20950">
    <property type="entry name" value="Flu_PB2_4th"/>
    <property type="match status" value="1"/>
</dbReference>
<dbReference type="Pfam" id="PF00604">
    <property type="entry name" value="Flu_PB2_5th"/>
    <property type="match status" value="1"/>
</dbReference>
<dbReference type="Pfam" id="PF20951">
    <property type="entry name" value="Flu_PB2_6th"/>
    <property type="match status" value="1"/>
</dbReference>
<dbReference type="Pfam" id="PF20952">
    <property type="entry name" value="Flu_PB2_7th"/>
    <property type="match status" value="1"/>
</dbReference>
<dbReference type="SUPFAM" id="SSF160453">
    <property type="entry name" value="PB2 C-terminal domain-like"/>
    <property type="match status" value="1"/>
</dbReference>
<proteinExistence type="inferred from homology"/>
<accession>Q2RCG6</accession>
<comment type="function">
    <text evidence="1">Plays an essential role in transcription initiation and cap-stealing mechanism, in which cellular capped pre-mRNAs are used to generate primers for viral transcription. Recognizes and binds the 7-methylguanosine-containing cap of the target pre-RNA which is subsequently cleaved after 10-13 nucleotides by the viral protein PA. Plays a role in the initiation of the viral genome replication and modulates the activity of the ribonucleoprotein (RNP) complex. In addition, participates in the inhibition of type I interferon induction through interaction with and inhibition of the host mitochondrial antiviral signaling protein MAVS.</text>
</comment>
<comment type="subunit">
    <text evidence="1">Influenza RNA polymerase is composed of three subunits: PB1, PB2 and PA. Interacts (via N-terminus) with PB1 (via C-terminus). Interacts with nucleoprotein NP (via N-terminus). Interacts (via N-terminus) with host MAVS (via N-terminus); this interaction inhibits host innate immune response.</text>
</comment>
<comment type="subcellular location">
    <subcellularLocation>
        <location evidence="1">Virion</location>
    </subcellularLocation>
    <subcellularLocation>
        <location evidence="1">Host nucleus</location>
    </subcellularLocation>
    <subcellularLocation>
        <location evidence="1">Host mitochondrion</location>
    </subcellularLocation>
</comment>
<comment type="similarity">
    <text evidence="1">Belongs to the influenza viruses PB2 family.</text>
</comment>
<keyword id="KW-1157">Cap snatching</keyword>
<keyword id="KW-1262">Eukaryotic host gene expression shutoff by virus</keyword>
<keyword id="KW-1191">Eukaryotic host transcription shutoff by virus</keyword>
<keyword id="KW-1190">Host gene expression shutoff by virus</keyword>
<keyword id="KW-1045">Host mitochondrion</keyword>
<keyword id="KW-1048">Host nucleus</keyword>
<keyword id="KW-0945">Host-virus interaction</keyword>
<keyword id="KW-1090">Inhibition of host innate immune response by virus</keyword>
<keyword id="KW-1097">Inhibition of host MAVS by virus</keyword>
<keyword id="KW-1113">Inhibition of host RLR pathway by virus</keyword>
<keyword id="KW-1104">Inhibition of host RNA polymerase II by virus</keyword>
<keyword id="KW-0506">mRNA capping</keyword>
<keyword id="KW-0507">mRNA processing</keyword>
<keyword id="KW-0899">Viral immunoevasion</keyword>
<keyword id="KW-1195">Viral transcription</keyword>
<keyword id="KW-0946">Virion</keyword>
<organism>
    <name type="scientific">Influenza A virus (strain A/Memphis/4/1980 H3N2)</name>
    <dbReference type="NCBI Taxonomy" id="383578"/>
    <lineage>
        <taxon>Viruses</taxon>
        <taxon>Riboviria</taxon>
        <taxon>Orthornavirae</taxon>
        <taxon>Negarnaviricota</taxon>
        <taxon>Polyploviricotina</taxon>
        <taxon>Insthoviricetes</taxon>
        <taxon>Articulavirales</taxon>
        <taxon>Orthomyxoviridae</taxon>
        <taxon>Alphainfluenzavirus</taxon>
        <taxon>Alphainfluenzavirus influenzae</taxon>
        <taxon>Influenza A virus</taxon>
    </lineage>
</organism>
<name>PB2_I80A4</name>